<protein>
    <recommendedName>
        <fullName evidence="1">Nucleoside diphosphate kinase</fullName>
        <shortName evidence="1">NDK</shortName>
        <shortName evidence="1">NDP kinase</shortName>
        <ecNumber evidence="1">2.7.4.6</ecNumber>
    </recommendedName>
    <alternativeName>
        <fullName evidence="1">Nucleoside-2-P kinase</fullName>
    </alternativeName>
</protein>
<reference key="1">
    <citation type="journal article" date="2008" name="PLoS ONE">
        <title>Genome sequence of Brucella abortus vaccine strain S19 compared to virulent strains yields candidate virulence genes.</title>
        <authorList>
            <person name="Crasta O.R."/>
            <person name="Folkerts O."/>
            <person name="Fei Z."/>
            <person name="Mane S.P."/>
            <person name="Evans C."/>
            <person name="Martino-Catt S."/>
            <person name="Bricker B."/>
            <person name="Yu G."/>
            <person name="Du L."/>
            <person name="Sobral B.W."/>
        </authorList>
    </citation>
    <scope>NUCLEOTIDE SEQUENCE [LARGE SCALE GENOMIC DNA]</scope>
    <source>
        <strain>S19</strain>
    </source>
</reference>
<keyword id="KW-0067">ATP-binding</keyword>
<keyword id="KW-0963">Cytoplasm</keyword>
<keyword id="KW-0418">Kinase</keyword>
<keyword id="KW-0460">Magnesium</keyword>
<keyword id="KW-0479">Metal-binding</keyword>
<keyword id="KW-0546">Nucleotide metabolism</keyword>
<keyword id="KW-0547">Nucleotide-binding</keyword>
<keyword id="KW-0597">Phosphoprotein</keyword>
<keyword id="KW-0808">Transferase</keyword>
<accession>B2S4V2</accession>
<evidence type="ECO:0000255" key="1">
    <source>
        <dbReference type="HAMAP-Rule" id="MF_00451"/>
    </source>
</evidence>
<comment type="function">
    <text evidence="1">Major role in the synthesis of nucleoside triphosphates other than ATP. The ATP gamma phosphate is transferred to the NDP beta phosphate via a ping-pong mechanism, using a phosphorylated active-site intermediate.</text>
</comment>
<comment type="catalytic activity">
    <reaction evidence="1">
        <text>a 2'-deoxyribonucleoside 5'-diphosphate + ATP = a 2'-deoxyribonucleoside 5'-triphosphate + ADP</text>
        <dbReference type="Rhea" id="RHEA:44640"/>
        <dbReference type="ChEBI" id="CHEBI:30616"/>
        <dbReference type="ChEBI" id="CHEBI:61560"/>
        <dbReference type="ChEBI" id="CHEBI:73316"/>
        <dbReference type="ChEBI" id="CHEBI:456216"/>
        <dbReference type="EC" id="2.7.4.6"/>
    </reaction>
</comment>
<comment type="catalytic activity">
    <reaction evidence="1">
        <text>a ribonucleoside 5'-diphosphate + ATP = a ribonucleoside 5'-triphosphate + ADP</text>
        <dbReference type="Rhea" id="RHEA:18113"/>
        <dbReference type="ChEBI" id="CHEBI:30616"/>
        <dbReference type="ChEBI" id="CHEBI:57930"/>
        <dbReference type="ChEBI" id="CHEBI:61557"/>
        <dbReference type="ChEBI" id="CHEBI:456216"/>
        <dbReference type="EC" id="2.7.4.6"/>
    </reaction>
</comment>
<comment type="cofactor">
    <cofactor evidence="1">
        <name>Mg(2+)</name>
        <dbReference type="ChEBI" id="CHEBI:18420"/>
    </cofactor>
</comment>
<comment type="subunit">
    <text evidence="1">Homotetramer.</text>
</comment>
<comment type="subcellular location">
    <subcellularLocation>
        <location evidence="1">Cytoplasm</location>
    </subcellularLocation>
</comment>
<comment type="similarity">
    <text evidence="1">Belongs to the NDK family.</text>
</comment>
<proteinExistence type="inferred from homology"/>
<gene>
    <name evidence="1" type="primary">ndk</name>
    <name type="ordered locus">BAbS19_I06680</name>
</gene>
<sequence>MAIERTFSMIKPDATRRNLTGAIIAKLEEAGLRVVASKRVWMSRREAEGFYAVHKDRPFFGELVEFMSSGPTVVQVLEGENAIAKNREVMGATNPANADEGTIRKTFALSIGENSVHGSDAPETAAEEIAYWFSGTEIVG</sequence>
<dbReference type="EC" id="2.7.4.6" evidence="1"/>
<dbReference type="EMBL" id="CP000887">
    <property type="protein sequence ID" value="ACD72199.1"/>
    <property type="molecule type" value="Genomic_DNA"/>
</dbReference>
<dbReference type="RefSeq" id="WP_002963836.1">
    <property type="nucleotide sequence ID" value="NC_010742.1"/>
</dbReference>
<dbReference type="SMR" id="B2S4V2"/>
<dbReference type="GeneID" id="97533983"/>
<dbReference type="KEGG" id="bmc:BAbS19_I06680"/>
<dbReference type="HOGENOM" id="CLU_060216_8_1_5"/>
<dbReference type="Proteomes" id="UP000002565">
    <property type="component" value="Chromosome 1"/>
</dbReference>
<dbReference type="GO" id="GO:0005737">
    <property type="term" value="C:cytoplasm"/>
    <property type="evidence" value="ECO:0007669"/>
    <property type="project" value="UniProtKB-SubCell"/>
</dbReference>
<dbReference type="GO" id="GO:0005524">
    <property type="term" value="F:ATP binding"/>
    <property type="evidence" value="ECO:0007669"/>
    <property type="project" value="UniProtKB-UniRule"/>
</dbReference>
<dbReference type="GO" id="GO:0046872">
    <property type="term" value="F:metal ion binding"/>
    <property type="evidence" value="ECO:0007669"/>
    <property type="project" value="UniProtKB-KW"/>
</dbReference>
<dbReference type="GO" id="GO:0004550">
    <property type="term" value="F:nucleoside diphosphate kinase activity"/>
    <property type="evidence" value="ECO:0007669"/>
    <property type="project" value="UniProtKB-UniRule"/>
</dbReference>
<dbReference type="GO" id="GO:0006241">
    <property type="term" value="P:CTP biosynthetic process"/>
    <property type="evidence" value="ECO:0007669"/>
    <property type="project" value="UniProtKB-UniRule"/>
</dbReference>
<dbReference type="GO" id="GO:0006183">
    <property type="term" value="P:GTP biosynthetic process"/>
    <property type="evidence" value="ECO:0007669"/>
    <property type="project" value="UniProtKB-UniRule"/>
</dbReference>
<dbReference type="GO" id="GO:0006228">
    <property type="term" value="P:UTP biosynthetic process"/>
    <property type="evidence" value="ECO:0007669"/>
    <property type="project" value="UniProtKB-UniRule"/>
</dbReference>
<dbReference type="CDD" id="cd04413">
    <property type="entry name" value="NDPk_I"/>
    <property type="match status" value="1"/>
</dbReference>
<dbReference type="FunFam" id="3.30.70.141:FF:000001">
    <property type="entry name" value="Nucleoside diphosphate kinase"/>
    <property type="match status" value="1"/>
</dbReference>
<dbReference type="Gene3D" id="3.30.70.141">
    <property type="entry name" value="Nucleoside diphosphate kinase-like domain"/>
    <property type="match status" value="1"/>
</dbReference>
<dbReference type="HAMAP" id="MF_00451">
    <property type="entry name" value="NDP_kinase"/>
    <property type="match status" value="1"/>
</dbReference>
<dbReference type="InterPro" id="IPR034907">
    <property type="entry name" value="NDK-like_dom"/>
</dbReference>
<dbReference type="InterPro" id="IPR036850">
    <property type="entry name" value="NDK-like_dom_sf"/>
</dbReference>
<dbReference type="InterPro" id="IPR001564">
    <property type="entry name" value="Nucleoside_diP_kinase"/>
</dbReference>
<dbReference type="InterPro" id="IPR023005">
    <property type="entry name" value="Nucleoside_diP_kinase_AS"/>
</dbReference>
<dbReference type="NCBIfam" id="NF001908">
    <property type="entry name" value="PRK00668.1"/>
    <property type="match status" value="1"/>
</dbReference>
<dbReference type="PANTHER" id="PTHR11349">
    <property type="entry name" value="NUCLEOSIDE DIPHOSPHATE KINASE"/>
    <property type="match status" value="1"/>
</dbReference>
<dbReference type="Pfam" id="PF00334">
    <property type="entry name" value="NDK"/>
    <property type="match status" value="1"/>
</dbReference>
<dbReference type="PRINTS" id="PR01243">
    <property type="entry name" value="NUCDPKINASE"/>
</dbReference>
<dbReference type="SMART" id="SM00562">
    <property type="entry name" value="NDK"/>
    <property type="match status" value="1"/>
</dbReference>
<dbReference type="SUPFAM" id="SSF54919">
    <property type="entry name" value="Nucleoside diphosphate kinase, NDK"/>
    <property type="match status" value="1"/>
</dbReference>
<dbReference type="PROSITE" id="PS00469">
    <property type="entry name" value="NDPK"/>
    <property type="match status" value="1"/>
</dbReference>
<dbReference type="PROSITE" id="PS51374">
    <property type="entry name" value="NDPK_LIKE"/>
    <property type="match status" value="1"/>
</dbReference>
<name>NDK_BRUA1</name>
<organism>
    <name type="scientific">Brucella abortus (strain S19)</name>
    <dbReference type="NCBI Taxonomy" id="430066"/>
    <lineage>
        <taxon>Bacteria</taxon>
        <taxon>Pseudomonadati</taxon>
        <taxon>Pseudomonadota</taxon>
        <taxon>Alphaproteobacteria</taxon>
        <taxon>Hyphomicrobiales</taxon>
        <taxon>Brucellaceae</taxon>
        <taxon>Brucella/Ochrobactrum group</taxon>
        <taxon>Brucella</taxon>
    </lineage>
</organism>
<feature type="chain" id="PRO_1000124935" description="Nucleoside diphosphate kinase">
    <location>
        <begin position="1"/>
        <end position="140"/>
    </location>
</feature>
<feature type="active site" description="Pros-phosphohistidine intermediate" evidence="1">
    <location>
        <position position="117"/>
    </location>
</feature>
<feature type="binding site" evidence="1">
    <location>
        <position position="11"/>
    </location>
    <ligand>
        <name>ATP</name>
        <dbReference type="ChEBI" id="CHEBI:30616"/>
    </ligand>
</feature>
<feature type="binding site" evidence="1">
    <location>
        <position position="59"/>
    </location>
    <ligand>
        <name>ATP</name>
        <dbReference type="ChEBI" id="CHEBI:30616"/>
    </ligand>
</feature>
<feature type="binding site" evidence="1">
    <location>
        <position position="87"/>
    </location>
    <ligand>
        <name>ATP</name>
        <dbReference type="ChEBI" id="CHEBI:30616"/>
    </ligand>
</feature>
<feature type="binding site" evidence="1">
    <location>
        <position position="93"/>
    </location>
    <ligand>
        <name>ATP</name>
        <dbReference type="ChEBI" id="CHEBI:30616"/>
    </ligand>
</feature>
<feature type="binding site" evidence="1">
    <location>
        <position position="104"/>
    </location>
    <ligand>
        <name>ATP</name>
        <dbReference type="ChEBI" id="CHEBI:30616"/>
    </ligand>
</feature>
<feature type="binding site" evidence="1">
    <location>
        <position position="114"/>
    </location>
    <ligand>
        <name>ATP</name>
        <dbReference type="ChEBI" id="CHEBI:30616"/>
    </ligand>
</feature>